<evidence type="ECO:0000255" key="1">
    <source>
        <dbReference type="HAMAP-Rule" id="MF_00137"/>
    </source>
</evidence>
<organism>
    <name type="scientific">Sinorhizobium medicae (strain WSM419)</name>
    <name type="common">Ensifer medicae</name>
    <dbReference type="NCBI Taxonomy" id="366394"/>
    <lineage>
        <taxon>Bacteria</taxon>
        <taxon>Pseudomonadati</taxon>
        <taxon>Pseudomonadota</taxon>
        <taxon>Alphaproteobacteria</taxon>
        <taxon>Hyphomicrobiales</taxon>
        <taxon>Rhizobiaceae</taxon>
        <taxon>Sinorhizobium/Ensifer group</taxon>
        <taxon>Sinorhizobium</taxon>
    </lineage>
</organism>
<keyword id="KW-0067">ATP-binding</keyword>
<keyword id="KW-0436">Ligase</keyword>
<keyword id="KW-0547">Nucleotide-binding</keyword>
<keyword id="KW-0658">Purine biosynthesis</keyword>
<feature type="chain" id="PRO_1000018782" description="Phosphoribosylaminoimidazole-succinocarboxamide synthase">
    <location>
        <begin position="1"/>
        <end position="254"/>
    </location>
</feature>
<sequence length="254" mass="29052">MNRRRRIYEGKAKILYEGPEPGTLIQFFKDDATAFNKKKHDVIDGKGVLNNRISEYIFTHLNKIGIPTHFIRRLNMREQLIKEVEIIPLEIVVRNVAAGSLSKRLGIEEGTVLPRSIIEFYYKADALDDPMVSEEHITAFGWASPQELDDIMALAIRINDFLSGLFLGVGIQLVDFKIECGRLYEGDMMRIILADEISPDSCRLWDIETKEKMDKDRFRRDMGGLVEAYQEVARRLGIINENEPPRGSGPVLVK</sequence>
<comment type="catalytic activity">
    <reaction evidence="1">
        <text>5-amino-1-(5-phospho-D-ribosyl)imidazole-4-carboxylate + L-aspartate + ATP = (2S)-2-[5-amino-1-(5-phospho-beta-D-ribosyl)imidazole-4-carboxamido]succinate + ADP + phosphate + 2 H(+)</text>
        <dbReference type="Rhea" id="RHEA:22628"/>
        <dbReference type="ChEBI" id="CHEBI:15378"/>
        <dbReference type="ChEBI" id="CHEBI:29991"/>
        <dbReference type="ChEBI" id="CHEBI:30616"/>
        <dbReference type="ChEBI" id="CHEBI:43474"/>
        <dbReference type="ChEBI" id="CHEBI:58443"/>
        <dbReference type="ChEBI" id="CHEBI:77657"/>
        <dbReference type="ChEBI" id="CHEBI:456216"/>
        <dbReference type="EC" id="6.3.2.6"/>
    </reaction>
</comment>
<comment type="pathway">
    <text evidence="1">Purine metabolism; IMP biosynthesis via de novo pathway; 5-amino-1-(5-phospho-D-ribosyl)imidazole-4-carboxamide from 5-amino-1-(5-phospho-D-ribosyl)imidazole-4-carboxylate: step 1/2.</text>
</comment>
<comment type="similarity">
    <text evidence="1">Belongs to the SAICAR synthetase family.</text>
</comment>
<proteinExistence type="inferred from homology"/>
<accession>A6U9L2</accession>
<name>PUR7_SINMW</name>
<protein>
    <recommendedName>
        <fullName evidence="1">Phosphoribosylaminoimidazole-succinocarboxamide synthase</fullName>
        <ecNumber evidence="1">6.3.2.6</ecNumber>
    </recommendedName>
    <alternativeName>
        <fullName evidence="1">SAICAR synthetase</fullName>
    </alternativeName>
</protein>
<gene>
    <name evidence="1" type="primary">purC</name>
    <name type="ordered locus">Smed_1498</name>
</gene>
<reference key="1">
    <citation type="submission" date="2007-06" db="EMBL/GenBank/DDBJ databases">
        <title>Complete sequence of Sinorhizobium medicae WSM419 chromosome.</title>
        <authorList>
            <consortium name="US DOE Joint Genome Institute"/>
            <person name="Copeland A."/>
            <person name="Lucas S."/>
            <person name="Lapidus A."/>
            <person name="Barry K."/>
            <person name="Glavina del Rio T."/>
            <person name="Dalin E."/>
            <person name="Tice H."/>
            <person name="Pitluck S."/>
            <person name="Chain P."/>
            <person name="Malfatti S."/>
            <person name="Shin M."/>
            <person name="Vergez L."/>
            <person name="Schmutz J."/>
            <person name="Larimer F."/>
            <person name="Land M."/>
            <person name="Hauser L."/>
            <person name="Kyrpides N."/>
            <person name="Mikhailova N."/>
            <person name="Reeve W.G."/>
            <person name="Richardson P."/>
        </authorList>
    </citation>
    <scope>NUCLEOTIDE SEQUENCE [LARGE SCALE GENOMIC DNA]</scope>
    <source>
        <strain>WSM419</strain>
    </source>
</reference>
<dbReference type="EC" id="6.3.2.6" evidence="1"/>
<dbReference type="EMBL" id="CP000738">
    <property type="protein sequence ID" value="ABR60342.1"/>
    <property type="molecule type" value="Genomic_DNA"/>
</dbReference>
<dbReference type="RefSeq" id="WP_011975652.1">
    <property type="nucleotide sequence ID" value="NC_009636.1"/>
</dbReference>
<dbReference type="RefSeq" id="YP_001327177.1">
    <property type="nucleotide sequence ID" value="NC_009636.1"/>
</dbReference>
<dbReference type="SMR" id="A6U9L2"/>
<dbReference type="STRING" id="366394.Smed_1498"/>
<dbReference type="GeneID" id="61612731"/>
<dbReference type="KEGG" id="smd:Smed_1498"/>
<dbReference type="PATRIC" id="fig|366394.8.peg.4631"/>
<dbReference type="eggNOG" id="COG0152">
    <property type="taxonomic scope" value="Bacteria"/>
</dbReference>
<dbReference type="HOGENOM" id="CLU_061495_2_0_5"/>
<dbReference type="OrthoDB" id="9801549at2"/>
<dbReference type="UniPathway" id="UPA00074">
    <property type="reaction ID" value="UER00131"/>
</dbReference>
<dbReference type="Proteomes" id="UP000001108">
    <property type="component" value="Chromosome"/>
</dbReference>
<dbReference type="GO" id="GO:0005829">
    <property type="term" value="C:cytosol"/>
    <property type="evidence" value="ECO:0007669"/>
    <property type="project" value="TreeGrafter"/>
</dbReference>
<dbReference type="GO" id="GO:0005524">
    <property type="term" value="F:ATP binding"/>
    <property type="evidence" value="ECO:0007669"/>
    <property type="project" value="UniProtKB-KW"/>
</dbReference>
<dbReference type="GO" id="GO:0004639">
    <property type="term" value="F:phosphoribosylaminoimidazolesuccinocarboxamide synthase activity"/>
    <property type="evidence" value="ECO:0007669"/>
    <property type="project" value="UniProtKB-UniRule"/>
</dbReference>
<dbReference type="GO" id="GO:0006189">
    <property type="term" value="P:'de novo' IMP biosynthetic process"/>
    <property type="evidence" value="ECO:0007669"/>
    <property type="project" value="UniProtKB-UniRule"/>
</dbReference>
<dbReference type="GO" id="GO:0009236">
    <property type="term" value="P:cobalamin biosynthetic process"/>
    <property type="evidence" value="ECO:0007669"/>
    <property type="project" value="InterPro"/>
</dbReference>
<dbReference type="CDD" id="cd01415">
    <property type="entry name" value="SAICAR_synt_PurC"/>
    <property type="match status" value="1"/>
</dbReference>
<dbReference type="FunFam" id="3.30.470.20:FF:000006">
    <property type="entry name" value="Phosphoribosylaminoimidazole-succinocarboxamide synthase"/>
    <property type="match status" value="1"/>
</dbReference>
<dbReference type="Gene3D" id="3.30.470.20">
    <property type="entry name" value="ATP-grasp fold, B domain"/>
    <property type="match status" value="1"/>
</dbReference>
<dbReference type="Gene3D" id="3.30.200.20">
    <property type="entry name" value="Phosphorylase Kinase, domain 1"/>
    <property type="match status" value="1"/>
</dbReference>
<dbReference type="HAMAP" id="MF_00137">
    <property type="entry name" value="SAICAR_synth"/>
    <property type="match status" value="1"/>
</dbReference>
<dbReference type="InterPro" id="IPR028923">
    <property type="entry name" value="SAICAR_synt/ADE2_N"/>
</dbReference>
<dbReference type="InterPro" id="IPR033934">
    <property type="entry name" value="SAICAR_synt_PurC"/>
</dbReference>
<dbReference type="InterPro" id="IPR001636">
    <property type="entry name" value="SAICAR_synth"/>
</dbReference>
<dbReference type="InterPro" id="IPR050089">
    <property type="entry name" value="SAICAR_synthetase"/>
</dbReference>
<dbReference type="InterPro" id="IPR018236">
    <property type="entry name" value="SAICAR_synthetase_CS"/>
</dbReference>
<dbReference type="NCBIfam" id="TIGR00081">
    <property type="entry name" value="purC"/>
    <property type="match status" value="1"/>
</dbReference>
<dbReference type="PANTHER" id="PTHR43599">
    <property type="entry name" value="MULTIFUNCTIONAL PROTEIN ADE2"/>
    <property type="match status" value="1"/>
</dbReference>
<dbReference type="PANTHER" id="PTHR43599:SF3">
    <property type="entry name" value="SI:DKEY-6E2.2"/>
    <property type="match status" value="1"/>
</dbReference>
<dbReference type="Pfam" id="PF01259">
    <property type="entry name" value="SAICAR_synt"/>
    <property type="match status" value="1"/>
</dbReference>
<dbReference type="SUPFAM" id="SSF56104">
    <property type="entry name" value="SAICAR synthase-like"/>
    <property type="match status" value="1"/>
</dbReference>
<dbReference type="PROSITE" id="PS01057">
    <property type="entry name" value="SAICAR_SYNTHETASE_1"/>
    <property type="match status" value="1"/>
</dbReference>